<organism evidence="13">
    <name type="scientific">Caenorhabditis elegans</name>
    <dbReference type="NCBI Taxonomy" id="6239"/>
    <lineage>
        <taxon>Eukaryota</taxon>
        <taxon>Metazoa</taxon>
        <taxon>Ecdysozoa</taxon>
        <taxon>Nematoda</taxon>
        <taxon>Chromadorea</taxon>
        <taxon>Rhabditida</taxon>
        <taxon>Rhabditina</taxon>
        <taxon>Rhabditomorpha</taxon>
        <taxon>Rhabditoidea</taxon>
        <taxon>Rhabditidae</taxon>
        <taxon>Peloderinae</taxon>
        <taxon>Caenorhabditis</taxon>
    </lineage>
</organism>
<reference evidence="11 12" key="1">
    <citation type="journal article" date="1993" name="Genes Dev.">
        <title>Migrations of the Caenorhabditis elegans HSNs are regulated by egl-43, a gene encoding two zinc finger proteins.</title>
        <authorList>
            <person name="Garriga G."/>
            <person name="Guenther C."/>
            <person name="Horvitz H.R."/>
        </authorList>
    </citation>
    <scope>NUCLEOTIDE SEQUENCE [MRNA] (ISOFORMS A AND B)</scope>
    <scope>FUNCTION</scope>
</reference>
<reference evidence="13" key="2">
    <citation type="journal article" date="1998" name="Science">
        <title>Genome sequence of the nematode C. elegans: a platform for investigating biology.</title>
        <authorList>
            <consortium name="The C. elegans sequencing consortium"/>
        </authorList>
    </citation>
    <scope>NUCLEOTIDE SEQUENCE [LARGE SCALE GENOMIC DNA]</scope>
    <source>
        <strain evidence="13">Bristol N2</strain>
    </source>
</reference>
<reference evidence="9" key="3">
    <citation type="journal article" date="1999" name="Genes Dev.">
        <title>The Caenorhabditis elegans gene ham-2 links Hox patterning to migration of the HSN motor neuron.</title>
        <authorList>
            <person name="Baum P.D."/>
            <person name="Guenther C."/>
            <person name="Frank C.A."/>
            <person name="Pham B.V."/>
            <person name="Garriga G."/>
        </authorList>
    </citation>
    <scope>FUNCTION</scope>
    <scope>SUBCELLULAR LOCATION</scope>
    <scope>DEVELOPMENTAL STAGE</scope>
</reference>
<reference evidence="9" key="4">
    <citation type="journal article" date="2007" name="Development">
        <title>C. elegans EVI1 proto-oncogene, EGL-43, is necessary for Notch-mediated cell fate specification and regulates cell invasion.</title>
        <authorList>
            <person name="Hwang B.J."/>
            <person name="Meruelo A.D."/>
            <person name="Sternberg P.W."/>
        </authorList>
    </citation>
    <scope>FUNCTION</scope>
    <scope>DEVELOPMENTAL STAGE</scope>
    <scope>DISRUPTION PHENOTYPE</scope>
</reference>
<reference evidence="9" key="5">
    <citation type="journal article" date="2007" name="Dev. Biol.">
        <title>Regulation of anchor cell invasion and uterine cell fates by the egl-43 Evi-1 proto-oncogene in Caenorhabditis elegans.</title>
        <authorList>
            <person name="Rimann I."/>
            <person name="Hajnal A."/>
        </authorList>
    </citation>
    <scope>FUNCTION</scope>
    <scope>DEVELOPMENTAL STAGE</scope>
    <scope>DISRUPTION PHENOTYPE</scope>
</reference>
<reference evidence="9" key="6">
    <citation type="journal article" date="2020" name="PLoS Genet.">
        <title>The Caenorhabditis elegans homolog of the Evi1 proto-oncogene, egl-43, coordinates G1 cell cycle arrest with pro-invasive gene expression during anchor cell invasion.</title>
        <authorList>
            <person name="Deng T."/>
            <person name="Stempor P."/>
            <person name="Appert A."/>
            <person name="Daube M."/>
            <person name="Ahringer J."/>
            <person name="Hajnal A."/>
            <person name="Lattmann E."/>
        </authorList>
    </citation>
    <scope>FUNCTION</scope>
    <scope>DEVELOPMENTAL STAGE</scope>
    <scope>DISRUPTION PHENOTYPE</scope>
    <scope>DOMAIN</scope>
</reference>
<evidence type="ECO:0000255" key="1">
    <source>
        <dbReference type="PROSITE-ProRule" id="PRU00042"/>
    </source>
</evidence>
<evidence type="ECO:0000256" key="2">
    <source>
        <dbReference type="SAM" id="MobiDB-lite"/>
    </source>
</evidence>
<evidence type="ECO:0000269" key="3">
    <source>
    </source>
</evidence>
<evidence type="ECO:0000269" key="4">
    <source>
    </source>
</evidence>
<evidence type="ECO:0000269" key="5">
    <source>
    </source>
</evidence>
<evidence type="ECO:0000269" key="6">
    <source>
    </source>
</evidence>
<evidence type="ECO:0000269" key="7">
    <source>
    </source>
</evidence>
<evidence type="ECO:0000303" key="8">
    <source>
    </source>
</evidence>
<evidence type="ECO:0000305" key="9"/>
<evidence type="ECO:0000305" key="10">
    <source>
    </source>
</evidence>
<evidence type="ECO:0000312" key="11">
    <source>
        <dbReference type="EMBL" id="AAB28819.1"/>
    </source>
</evidence>
<evidence type="ECO:0000312" key="12">
    <source>
        <dbReference type="EMBL" id="AAB28820.1"/>
    </source>
</evidence>
<evidence type="ECO:0000312" key="13">
    <source>
        <dbReference type="Proteomes" id="UP000001940"/>
    </source>
</evidence>
<evidence type="ECO:0000312" key="14">
    <source>
        <dbReference type="WormBase" id="R53.3a"/>
    </source>
</evidence>
<evidence type="ECO:0000312" key="15">
    <source>
        <dbReference type="WormBase" id="R53.3b"/>
    </source>
</evidence>
<sequence>MSIDTDFLTSVEVKEDELHGNVLIAVTQIALGRTIGVIDKATPNDSNALLILNLIKEADDGEDANICMRQEDRKTFLQTSKIINIGERLLLQRLSEEECDEEDQDDLENLILLKDEDRPDSTQSCTKSSSEDSNLNGFEEYIREHGELVPGQTPPDGSHKCGVCPKSFSSASGLKQHSHIHCSLKPFRCHLCPKSYTQFSNLCRHRRVHSDGWTCPTCQSQMPSQAALTKHRPVCEMTALYKPLMAQLAGLSGAGGLGSVPYWPHILQMATQAPHFPLAFLAANPEAYKLMQQTTCASPDAECSSGHASESSPTTTEPVDLTATPKPPSTSEMETTSKSDDGEDRDSIGDSGNDDDDDSEAGVLDESSTTTSTKKRPTSHTISDILAAPQLGAQALNSTFLGMLQRSLNYNPAVPSPHSFLRAMSGAKASSSPSSSSGSGKDRYTCKFCQKVFPRSANLTRHLRTHTGEQPYKCQYCERSFSISSNLQRHVRNIHNKPNTSLTPHNHHRQRSLHNSTSTSTTTTTVHHPLLHLPGTSVPVPKV</sequence>
<keyword id="KW-0025">Alternative splicing</keyword>
<keyword id="KW-0217">Developmental protein</keyword>
<keyword id="KW-0479">Metal-binding</keyword>
<keyword id="KW-0524">Neurogenesis</keyword>
<keyword id="KW-0539">Nucleus</keyword>
<keyword id="KW-1185">Reference proteome</keyword>
<keyword id="KW-0677">Repeat</keyword>
<keyword id="KW-0804">Transcription</keyword>
<keyword id="KW-0862">Zinc</keyword>
<keyword id="KW-0863">Zinc-finger</keyword>
<name>EGL43_CAEEL</name>
<proteinExistence type="evidence at protein level"/>
<feature type="chain" id="PRO_0000451575" description="Zinc finger protein egl-43">
    <location>
        <begin position="1"/>
        <end position="543"/>
    </location>
</feature>
<feature type="zinc finger region" description="C2H2-type 1" evidence="1">
    <location>
        <begin position="159"/>
        <end position="181"/>
    </location>
</feature>
<feature type="zinc finger region" description="C2H2-type 2" evidence="1">
    <location>
        <begin position="187"/>
        <end position="209"/>
    </location>
</feature>
<feature type="zinc finger region" description="C2H2-type 3; atypical" evidence="1">
    <location>
        <begin position="213"/>
        <end position="233"/>
    </location>
</feature>
<feature type="zinc finger region" description="C2H2-type 4" evidence="1">
    <location>
        <begin position="444"/>
        <end position="466"/>
    </location>
</feature>
<feature type="zinc finger region" description="C2H2-type 5" evidence="1">
    <location>
        <begin position="472"/>
        <end position="495"/>
    </location>
</feature>
<feature type="region of interest" description="Positive regulatory (PR) domain" evidence="10">
    <location>
        <begin position="2"/>
        <end position="62"/>
    </location>
</feature>
<feature type="region of interest" description="Disordered" evidence="2">
    <location>
        <begin position="299"/>
        <end position="380"/>
    </location>
</feature>
<feature type="region of interest" description="Disordered" evidence="2">
    <location>
        <begin position="496"/>
        <end position="543"/>
    </location>
</feature>
<feature type="compositionally biased region" description="Polar residues" evidence="2">
    <location>
        <begin position="306"/>
        <end position="317"/>
    </location>
</feature>
<feature type="compositionally biased region" description="Basic and acidic residues" evidence="2">
    <location>
        <begin position="335"/>
        <end position="348"/>
    </location>
</feature>
<feature type="compositionally biased region" description="Low complexity" evidence="2">
    <location>
        <begin position="513"/>
        <end position="533"/>
    </location>
</feature>
<feature type="splice variant" id="VSP_060814" description="In isoform b." evidence="9">
    <location>
        <begin position="1"/>
        <end position="221"/>
    </location>
</feature>
<protein>
    <recommendedName>
        <fullName evidence="9">Zinc finger protein egl-43</fullName>
    </recommendedName>
    <alternativeName>
        <fullName evidence="14">Egg-laying defective protein 43</fullName>
    </alternativeName>
</protein>
<accession>Q22024</accession>
<accession>Q22023</accession>
<accession>Q26336</accession>
<accession>Q26337</accession>
<accession>Q7JM79</accession>
<accession>Q7JPS6</accession>
<comment type="function">
    <text evidence="3 5 7">Probable transcription factor, required for migration of the hermaphrodite-specific motor neurons (HSNs) from the tail to the gonad primordium during HSN cell differentiation (PubMed:10049362, PubMed:8224840). Required for phasmid neuron development (PubMed:8224840). Required to specify the pi-cell fate of ventral uterine precursor cell (VU) cells (PubMed:17573066).</text>
</comment>
<comment type="function">
    <molecule>Isoform a</molecule>
    <text evidence="4 5 6">Probable transcription factor, involved in lin-12 (Notch)-dependent anchor cell (AC) and ventral uterine (VU) precursor cell fate specification and in AC invasion (PubMed:17215301, PubMed:17573066, PubMed:32203506). Prevents AC proliferation after AC cell specification by repressing lin-12 expression (PubMed:32203506). May form a positive feedback loop, together with the transcription factor fos-1, that maintains mutual high levels of expression and so activates AC invasion (PubMed:32203506).</text>
</comment>
<comment type="function">
    <molecule>Isoform b</molecule>
    <text evidence="6">Dispensable for anchor cell (AC) invasion and for preventing AC proliferation.</text>
</comment>
<comment type="subcellular location">
    <subcellularLocation>
        <location evidence="3">Nucleus</location>
    </subcellularLocation>
</comment>
<comment type="alternative products">
    <event type="alternative splicing"/>
    <isoform>
        <id>Q22024-1</id>
        <name evidence="14">a</name>
        <name evidence="8">egl-43L</name>
        <sequence type="displayed"/>
    </isoform>
    <isoform>
        <id>Q22024-2</id>
        <name evidence="15">b</name>
        <name evidence="8">egl-43S</name>
        <sequence type="described" ref="VSP_060814"/>
    </isoform>
</comment>
<comment type="developmental stage">
    <text evidence="3 4 6">Expressed in the hermaphrodite-specific motor neuron (HSN) / phasmid sensory neuron B (PHB) precursor, and the phasmid sensory neuron A (PHA) in the tail at ~400 minutes embryogenesis (at protein level) (PubMed:10049362). Continues to be expressed in PHA and PHB neurons of L1 larvae (PubMed:10049362). Expressed in the HSN before and during HSN migration from the tail to the gonad primordium of the embryo and down-regulated after migration (at protein level) (PubMed:10049362). Expressed in the pre-anchor cell (AC)/pre-ventral uterine (VU) cells at early L2 and maintained in their 37 descendants at early L4 (PubMed:17215301, PubMed:32203506).</text>
</comment>
<comment type="developmental stage">
    <molecule>Isoform a</molecule>
    <text evidence="5 6">Expressed in the ventral uterine (VU) cells of mid L2 larvae (Pn.p stage) and then in the anchor cell (AC) beginning in mid L3 larvae (PubMed:17573066, PubMed:32203506). Expression increases during AC invasion (PubMed:17573066).</text>
</comment>
<comment type="developmental stage">
    <molecule>Isoform b</molecule>
    <text evidence="5">Expressed, earlier than isoform a, in the anchor cell (AC) at the Pn.p stage in mid L2 larvae (PubMed:17573066). Expression decreases during AC invasion (PubMed:17573066).</text>
</comment>
<comment type="domain">
    <text evidence="6">The positive regulatory (PR) domain is required for egl-43 protein stability but is dispensable for anchor cell (AC) invasion and preventing AC proliferation.</text>
</comment>
<comment type="domain">
    <text evidence="6">The C2H2-type zinc-finger domains 1, 2 and 3 are dispensable for anchor cell (AC) invasion and preventing AC proliferation.</text>
</comment>
<comment type="domain">
    <text evidence="6">The C2H2-type zinc-finger domains 4 and 5 may be required for anchor cell (AC) invasion and preventing AC proliferation.</text>
</comment>
<comment type="disruption phenotype">
    <text evidence="4 5 6">RNAi-mediated knockdown causes defects in anchor cell (AC) and ventral uterine (VU) precursor cell specification and AC invasion in the larval L3 and L4 stages (PubMed:17215301, PubMed:17573066). RNAi-mediated knockdown on a lin-12 mutant background reverses the AC-deficient phenotype (PubMed:17215301). RNAi-mediated knockdown reduces expression of zmp-1, cdh-3 and him-4 in the AC (PubMed:17215301, PubMed:17573066). RNAi-mediated knockdown reduces expression of fos-1a in the anchor cell (AC) approximately three-fold (PubMed:32203506). RNAi-mediated knockdown causes defects in vulval morphogenesis (PubMed:17573066).</text>
</comment>
<comment type="disruption phenotype">
    <molecule>Isoform a</molecule>
    <text evidence="5 6">RNAi-mediated knockdown causes defects in anchor cell (AC) invasion, including increased CDK activity and re-entry of the AC into the cell cycle, resulting in the presence of two or more AC.</text>
</comment>
<comment type="disruption phenotype">
    <molecule>Isoform b</molecule>
    <text evidence="6">No defects in anchor cell (AC) invasion or arrest in G1 seen upon RNAi-mediated knockdown.</text>
</comment>
<comment type="sequence caution" evidence="9">
    <conflict type="frameshift">
        <sequence resource="EMBL-CDS" id="AAB28819"/>
    </conflict>
</comment>
<comment type="sequence caution" evidence="9">
    <conflict type="frameshift">
        <sequence resource="EMBL-CDS" id="AAB28820"/>
    </conflict>
</comment>
<dbReference type="EMBL" id="S66757">
    <property type="protein sequence ID" value="AAB28819.1"/>
    <property type="status" value="ALT_FRAME"/>
    <property type="molecule type" value="mRNA"/>
</dbReference>
<dbReference type="EMBL" id="S66936">
    <property type="protein sequence ID" value="AAB28820.1"/>
    <property type="status" value="ALT_FRAME"/>
    <property type="molecule type" value="mRNA"/>
</dbReference>
<dbReference type="EMBL" id="BX284602">
    <property type="protein sequence ID" value="CAA91352.1"/>
    <property type="molecule type" value="Genomic_DNA"/>
</dbReference>
<dbReference type="EMBL" id="BX284602">
    <property type="protein sequence ID" value="CAA91353.1"/>
    <property type="molecule type" value="Genomic_DNA"/>
</dbReference>
<dbReference type="PIR" id="A49073">
    <property type="entry name" value="A49073"/>
</dbReference>
<dbReference type="PIR" id="E88280">
    <property type="entry name" value="E88280"/>
</dbReference>
<dbReference type="RefSeq" id="NP_001022288.1">
    <molecule id="Q22024-1"/>
    <property type="nucleotide sequence ID" value="NM_001027117.6"/>
</dbReference>
<dbReference type="RefSeq" id="NP_001359539.1">
    <molecule id="Q22024-2"/>
    <property type="nucleotide sequence ID" value="NM_001373787.1"/>
</dbReference>
<dbReference type="RefSeq" id="NP_496149.3">
    <property type="nucleotide sequence ID" value="NM_063748.4"/>
</dbReference>
<dbReference type="FunCoup" id="Q22024">
    <property type="interactions" value="155"/>
</dbReference>
<dbReference type="IntAct" id="Q22024">
    <property type="interactions" value="33"/>
</dbReference>
<dbReference type="STRING" id="6239.R53.3a.1"/>
<dbReference type="PaxDb" id="6239-R53.3a"/>
<dbReference type="PeptideAtlas" id="Q22024"/>
<dbReference type="EnsemblMetazoa" id="R53.3a.1">
    <molecule id="Q22024-1"/>
    <property type="protein sequence ID" value="R53.3a.1"/>
    <property type="gene ID" value="WBGene00001207"/>
</dbReference>
<dbReference type="EnsemblMetazoa" id="R53.3b.1">
    <molecule id="Q22024-2"/>
    <property type="protein sequence ID" value="R53.3b.1"/>
    <property type="gene ID" value="WBGene00001207"/>
</dbReference>
<dbReference type="EnsemblMetazoa" id="R53.3b.2">
    <molecule id="Q22024-2"/>
    <property type="protein sequence ID" value="R53.3b.2"/>
    <property type="gene ID" value="WBGene00001207"/>
</dbReference>
<dbReference type="GeneID" id="174552"/>
<dbReference type="KEGG" id="cel:CELE_R53.3"/>
<dbReference type="UCSC" id="R53.3a">
    <property type="organism name" value="c. elegans"/>
</dbReference>
<dbReference type="AGR" id="WB:WBGene00001207"/>
<dbReference type="CTD" id="174552"/>
<dbReference type="WormBase" id="R53.3a">
    <molecule id="Q22024-1"/>
    <property type="protein sequence ID" value="CE03572"/>
    <property type="gene ID" value="WBGene00001207"/>
    <property type="gene designation" value="egl-43"/>
</dbReference>
<dbReference type="WormBase" id="R53.3b">
    <molecule id="Q22024-2"/>
    <property type="protein sequence ID" value="CE03573"/>
    <property type="gene ID" value="WBGene00001207"/>
    <property type="gene designation" value="egl-43"/>
</dbReference>
<dbReference type="eggNOG" id="KOG1721">
    <property type="taxonomic scope" value="Eukaryota"/>
</dbReference>
<dbReference type="GeneTree" id="ENSGT00940000157208"/>
<dbReference type="HOGENOM" id="CLU_863905_0_0_1"/>
<dbReference type="InParanoid" id="Q22024"/>
<dbReference type="OMA" id="HCSLKPF"/>
<dbReference type="OrthoDB" id="9368434at2759"/>
<dbReference type="PhylomeDB" id="Q22024"/>
<dbReference type="Reactome" id="R-CEL-3214841">
    <property type="pathway name" value="PKMTs methylate histone lysines"/>
</dbReference>
<dbReference type="Reactome" id="R-CEL-8943724">
    <property type="pathway name" value="Regulation of PTEN gene transcription"/>
</dbReference>
<dbReference type="SignaLink" id="Q22024"/>
<dbReference type="PRO" id="PR:Q22024"/>
<dbReference type="Proteomes" id="UP000001940">
    <property type="component" value="Chromosome II"/>
</dbReference>
<dbReference type="Bgee" id="WBGene00001207">
    <property type="expression patterns" value="Expressed in pharyngeal muscle cell (C elegans) and 3 other cell types or tissues"/>
</dbReference>
<dbReference type="ExpressionAtlas" id="Q22024">
    <property type="expression patterns" value="baseline"/>
</dbReference>
<dbReference type="GO" id="GO:0005634">
    <property type="term" value="C:nucleus"/>
    <property type="evidence" value="ECO:0000314"/>
    <property type="project" value="WormBase"/>
</dbReference>
<dbReference type="GO" id="GO:0001228">
    <property type="term" value="F:DNA-binding transcription activator activity, RNA polymerase II-specific"/>
    <property type="evidence" value="ECO:0000318"/>
    <property type="project" value="GO_Central"/>
</dbReference>
<dbReference type="GO" id="GO:0003700">
    <property type="term" value="F:DNA-binding transcription factor activity"/>
    <property type="evidence" value="ECO:0000314"/>
    <property type="project" value="UniProtKB"/>
</dbReference>
<dbReference type="GO" id="GO:0000978">
    <property type="term" value="F:RNA polymerase II cis-regulatory region sequence-specific DNA binding"/>
    <property type="evidence" value="ECO:0000318"/>
    <property type="project" value="GO_Central"/>
</dbReference>
<dbReference type="GO" id="GO:0008270">
    <property type="term" value="F:zinc ion binding"/>
    <property type="evidence" value="ECO:0007669"/>
    <property type="project" value="UniProtKB-KW"/>
</dbReference>
<dbReference type="GO" id="GO:0000122">
    <property type="term" value="P:negative regulation of transcription by RNA polymerase II"/>
    <property type="evidence" value="ECO:0000315"/>
    <property type="project" value="UniProtKB"/>
</dbReference>
<dbReference type="GO" id="GO:0007399">
    <property type="term" value="P:nervous system development"/>
    <property type="evidence" value="ECO:0007669"/>
    <property type="project" value="UniProtKB-KW"/>
</dbReference>
<dbReference type="GO" id="GO:0045944">
    <property type="term" value="P:positive regulation of transcription by RNA polymerase II"/>
    <property type="evidence" value="ECO:0000315"/>
    <property type="project" value="UniProtKB"/>
</dbReference>
<dbReference type="GO" id="GO:0042659">
    <property type="term" value="P:regulation of cell fate specification"/>
    <property type="evidence" value="ECO:0000315"/>
    <property type="project" value="UniProtKB"/>
</dbReference>
<dbReference type="GO" id="GO:0030334">
    <property type="term" value="P:regulation of cell migration"/>
    <property type="evidence" value="ECO:0000315"/>
    <property type="project" value="UniProtKB"/>
</dbReference>
<dbReference type="GO" id="GO:0006355">
    <property type="term" value="P:regulation of DNA-templated transcription"/>
    <property type="evidence" value="ECO:0000304"/>
    <property type="project" value="WormBase"/>
</dbReference>
<dbReference type="GO" id="GO:0007346">
    <property type="term" value="P:regulation of mitotic cell cycle"/>
    <property type="evidence" value="ECO:0000315"/>
    <property type="project" value="UniProtKB"/>
</dbReference>
<dbReference type="GO" id="GO:0045664">
    <property type="term" value="P:regulation of neuron differentiation"/>
    <property type="evidence" value="ECO:0000315"/>
    <property type="project" value="WormBase"/>
</dbReference>
<dbReference type="GO" id="GO:0006357">
    <property type="term" value="P:regulation of transcription by RNA polymerase II"/>
    <property type="evidence" value="ECO:0000318"/>
    <property type="project" value="GO_Central"/>
</dbReference>
<dbReference type="FunFam" id="3.30.160.60:FF:004055">
    <property type="entry name" value="Zinc finger imprinted 3"/>
    <property type="match status" value="1"/>
</dbReference>
<dbReference type="FunFam" id="3.30.160.60:FF:000446">
    <property type="entry name" value="Zinc finger protein"/>
    <property type="match status" value="1"/>
</dbReference>
<dbReference type="FunFam" id="3.30.160.60:FF:001031">
    <property type="entry name" value="zinc finger protein 341 isoform X1"/>
    <property type="match status" value="1"/>
</dbReference>
<dbReference type="FunFam" id="3.30.160.60:FF:000653">
    <property type="entry name" value="Zinc finger protein Pegasus"/>
    <property type="match status" value="1"/>
</dbReference>
<dbReference type="Gene3D" id="3.30.160.60">
    <property type="entry name" value="Classic Zinc Finger"/>
    <property type="match status" value="4"/>
</dbReference>
<dbReference type="InterPro" id="IPR036236">
    <property type="entry name" value="Znf_C2H2_sf"/>
</dbReference>
<dbReference type="InterPro" id="IPR013087">
    <property type="entry name" value="Znf_C2H2_type"/>
</dbReference>
<dbReference type="PANTHER" id="PTHR24393:SF124">
    <property type="entry name" value="C2H2-TYPE DOMAIN-CONTAINING PROTEIN-RELATED"/>
    <property type="match status" value="1"/>
</dbReference>
<dbReference type="PANTHER" id="PTHR24393">
    <property type="entry name" value="ZINC FINGER PROTEIN"/>
    <property type="match status" value="1"/>
</dbReference>
<dbReference type="Pfam" id="PF00096">
    <property type="entry name" value="zf-C2H2"/>
    <property type="match status" value="4"/>
</dbReference>
<dbReference type="SMART" id="SM00355">
    <property type="entry name" value="ZnF_C2H2"/>
    <property type="match status" value="5"/>
</dbReference>
<dbReference type="SUPFAM" id="SSF57667">
    <property type="entry name" value="beta-beta-alpha zinc fingers"/>
    <property type="match status" value="2"/>
</dbReference>
<dbReference type="PROSITE" id="PS00028">
    <property type="entry name" value="ZINC_FINGER_C2H2_1"/>
    <property type="match status" value="4"/>
</dbReference>
<dbReference type="PROSITE" id="PS50157">
    <property type="entry name" value="ZINC_FINGER_C2H2_2"/>
    <property type="match status" value="4"/>
</dbReference>
<gene>
    <name evidence="14" type="primary">egl-43</name>
    <name evidence="14" type="ORF">R53.3</name>
</gene>